<protein>
    <recommendedName>
        <fullName evidence="1">Uracil phosphoribosyltransferase</fullName>
        <ecNumber evidence="1">2.4.2.9</ecNumber>
    </recommendedName>
    <alternativeName>
        <fullName evidence="1">UMP pyrophosphorylase</fullName>
    </alternativeName>
    <alternativeName>
        <fullName evidence="1">UPRTase</fullName>
    </alternativeName>
</protein>
<keyword id="KW-0021">Allosteric enzyme</keyword>
<keyword id="KW-0328">Glycosyltransferase</keyword>
<keyword id="KW-0342">GTP-binding</keyword>
<keyword id="KW-0460">Magnesium</keyword>
<keyword id="KW-0547">Nucleotide-binding</keyword>
<keyword id="KW-0808">Transferase</keyword>
<feature type="chain" id="PRO_1000139083" description="Uracil phosphoribosyltransferase">
    <location>
        <begin position="1"/>
        <end position="211"/>
    </location>
</feature>
<feature type="binding site" evidence="1">
    <location>
        <position position="78"/>
    </location>
    <ligand>
        <name>5-phospho-alpha-D-ribose 1-diphosphate</name>
        <dbReference type="ChEBI" id="CHEBI:58017"/>
    </ligand>
</feature>
<feature type="binding site" evidence="1">
    <location>
        <position position="103"/>
    </location>
    <ligand>
        <name>5-phospho-alpha-D-ribose 1-diphosphate</name>
        <dbReference type="ChEBI" id="CHEBI:58017"/>
    </ligand>
</feature>
<feature type="binding site" evidence="1">
    <location>
        <begin position="130"/>
        <end position="138"/>
    </location>
    <ligand>
        <name>5-phospho-alpha-D-ribose 1-diphosphate</name>
        <dbReference type="ChEBI" id="CHEBI:58017"/>
    </ligand>
</feature>
<feature type="binding site" evidence="1">
    <location>
        <position position="193"/>
    </location>
    <ligand>
        <name>uracil</name>
        <dbReference type="ChEBI" id="CHEBI:17568"/>
    </ligand>
</feature>
<feature type="binding site" evidence="1">
    <location>
        <begin position="198"/>
        <end position="200"/>
    </location>
    <ligand>
        <name>uracil</name>
        <dbReference type="ChEBI" id="CHEBI:17568"/>
    </ligand>
</feature>
<feature type="binding site" evidence="1">
    <location>
        <position position="199"/>
    </location>
    <ligand>
        <name>5-phospho-alpha-D-ribose 1-diphosphate</name>
        <dbReference type="ChEBI" id="CHEBI:58017"/>
    </ligand>
</feature>
<organism>
    <name type="scientific">Acinetobacter baumannii (strain AB0057)</name>
    <dbReference type="NCBI Taxonomy" id="480119"/>
    <lineage>
        <taxon>Bacteria</taxon>
        <taxon>Pseudomonadati</taxon>
        <taxon>Pseudomonadota</taxon>
        <taxon>Gammaproteobacteria</taxon>
        <taxon>Moraxellales</taxon>
        <taxon>Moraxellaceae</taxon>
        <taxon>Acinetobacter</taxon>
        <taxon>Acinetobacter calcoaceticus/baumannii complex</taxon>
    </lineage>
</organism>
<evidence type="ECO:0000255" key="1">
    <source>
        <dbReference type="HAMAP-Rule" id="MF_01218"/>
    </source>
</evidence>
<comment type="function">
    <text evidence="1">Catalyzes the conversion of uracil and 5-phospho-alpha-D-ribose 1-diphosphate (PRPP) to UMP and diphosphate.</text>
</comment>
<comment type="catalytic activity">
    <reaction evidence="1">
        <text>UMP + diphosphate = 5-phospho-alpha-D-ribose 1-diphosphate + uracil</text>
        <dbReference type="Rhea" id="RHEA:13017"/>
        <dbReference type="ChEBI" id="CHEBI:17568"/>
        <dbReference type="ChEBI" id="CHEBI:33019"/>
        <dbReference type="ChEBI" id="CHEBI:57865"/>
        <dbReference type="ChEBI" id="CHEBI:58017"/>
        <dbReference type="EC" id="2.4.2.9"/>
    </reaction>
</comment>
<comment type="cofactor">
    <cofactor evidence="1">
        <name>Mg(2+)</name>
        <dbReference type="ChEBI" id="CHEBI:18420"/>
    </cofactor>
    <text evidence="1">Binds 1 Mg(2+) ion per subunit. The magnesium is bound as Mg-PRPP.</text>
</comment>
<comment type="activity regulation">
    <text evidence="1">Allosterically activated by GTP.</text>
</comment>
<comment type="pathway">
    <text evidence="1">Pyrimidine metabolism; UMP biosynthesis via salvage pathway; UMP from uracil: step 1/1.</text>
</comment>
<comment type="similarity">
    <text evidence="1">Belongs to the UPRTase family.</text>
</comment>
<dbReference type="EC" id="2.4.2.9" evidence="1"/>
<dbReference type="EMBL" id="CP001182">
    <property type="protein sequence ID" value="ACJ40611.1"/>
    <property type="molecule type" value="Genomic_DNA"/>
</dbReference>
<dbReference type="RefSeq" id="WP_001007343.1">
    <property type="nucleotide sequence ID" value="NC_011586.2"/>
</dbReference>
<dbReference type="SMR" id="B7I752"/>
<dbReference type="GeneID" id="92892695"/>
<dbReference type="KEGG" id="abn:AB57_0813"/>
<dbReference type="HOGENOM" id="CLU_067096_2_2_6"/>
<dbReference type="UniPathway" id="UPA00574">
    <property type="reaction ID" value="UER00636"/>
</dbReference>
<dbReference type="Proteomes" id="UP000007094">
    <property type="component" value="Chromosome"/>
</dbReference>
<dbReference type="GO" id="GO:0005525">
    <property type="term" value="F:GTP binding"/>
    <property type="evidence" value="ECO:0007669"/>
    <property type="project" value="UniProtKB-KW"/>
</dbReference>
<dbReference type="GO" id="GO:0000287">
    <property type="term" value="F:magnesium ion binding"/>
    <property type="evidence" value="ECO:0007669"/>
    <property type="project" value="UniProtKB-UniRule"/>
</dbReference>
<dbReference type="GO" id="GO:0004845">
    <property type="term" value="F:uracil phosphoribosyltransferase activity"/>
    <property type="evidence" value="ECO:0007669"/>
    <property type="project" value="UniProtKB-UniRule"/>
</dbReference>
<dbReference type="GO" id="GO:0044206">
    <property type="term" value="P:UMP salvage"/>
    <property type="evidence" value="ECO:0007669"/>
    <property type="project" value="UniProtKB-UniRule"/>
</dbReference>
<dbReference type="GO" id="GO:0006223">
    <property type="term" value="P:uracil salvage"/>
    <property type="evidence" value="ECO:0007669"/>
    <property type="project" value="InterPro"/>
</dbReference>
<dbReference type="CDD" id="cd06223">
    <property type="entry name" value="PRTases_typeI"/>
    <property type="match status" value="1"/>
</dbReference>
<dbReference type="FunFam" id="3.40.50.2020:FF:000003">
    <property type="entry name" value="Uracil phosphoribosyltransferase"/>
    <property type="match status" value="1"/>
</dbReference>
<dbReference type="Gene3D" id="3.40.50.2020">
    <property type="match status" value="1"/>
</dbReference>
<dbReference type="HAMAP" id="MF_01218_B">
    <property type="entry name" value="Upp_B"/>
    <property type="match status" value="1"/>
</dbReference>
<dbReference type="InterPro" id="IPR000836">
    <property type="entry name" value="PRibTrfase_dom"/>
</dbReference>
<dbReference type="InterPro" id="IPR029057">
    <property type="entry name" value="PRTase-like"/>
</dbReference>
<dbReference type="InterPro" id="IPR034332">
    <property type="entry name" value="Upp_B"/>
</dbReference>
<dbReference type="InterPro" id="IPR050054">
    <property type="entry name" value="UPRTase/APRTase"/>
</dbReference>
<dbReference type="InterPro" id="IPR005765">
    <property type="entry name" value="Ura_phspho_trans"/>
</dbReference>
<dbReference type="NCBIfam" id="NF001097">
    <property type="entry name" value="PRK00129.1"/>
    <property type="match status" value="1"/>
</dbReference>
<dbReference type="NCBIfam" id="TIGR01091">
    <property type="entry name" value="upp"/>
    <property type="match status" value="1"/>
</dbReference>
<dbReference type="PANTHER" id="PTHR32315">
    <property type="entry name" value="ADENINE PHOSPHORIBOSYLTRANSFERASE"/>
    <property type="match status" value="1"/>
</dbReference>
<dbReference type="PANTHER" id="PTHR32315:SF4">
    <property type="entry name" value="URACIL PHOSPHORIBOSYLTRANSFERASE, CHLOROPLASTIC"/>
    <property type="match status" value="1"/>
</dbReference>
<dbReference type="Pfam" id="PF14681">
    <property type="entry name" value="UPRTase"/>
    <property type="match status" value="1"/>
</dbReference>
<dbReference type="SUPFAM" id="SSF53271">
    <property type="entry name" value="PRTase-like"/>
    <property type="match status" value="1"/>
</dbReference>
<sequence length="211" mass="22833">MAIQEIRHPLIRHKLGLLRRADISTKNFRELAQEVTMLLTYEATKDLPVVDCEIEGWAGNVTTQRIAGKKITIVPILRAGIGMLDGVLNLIPSAKVSVLGLERDEATLEVRTYYKKLVPDVANRIAMIIDPMLATGNSLVAAIDVLKASGCKDIRVMVLVAAPEGIAKVEAAHPDIQLYTASIDNGLNEHGYIVPGLGDAGDKIFGSVQKD</sequence>
<name>UPP_ACIB5</name>
<proteinExistence type="inferred from homology"/>
<gene>
    <name evidence="1" type="primary">upp</name>
    <name type="ordered locus">AB57_0813</name>
</gene>
<accession>B7I752</accession>
<reference key="1">
    <citation type="journal article" date="2008" name="J. Bacteriol.">
        <title>Comparative genome sequence analysis of multidrug-resistant Acinetobacter baumannii.</title>
        <authorList>
            <person name="Adams M.D."/>
            <person name="Goglin K."/>
            <person name="Molyneaux N."/>
            <person name="Hujer K.M."/>
            <person name="Lavender H."/>
            <person name="Jamison J.J."/>
            <person name="MacDonald I.J."/>
            <person name="Martin K.M."/>
            <person name="Russo T."/>
            <person name="Campagnari A.A."/>
            <person name="Hujer A.M."/>
            <person name="Bonomo R.A."/>
            <person name="Gill S.R."/>
        </authorList>
    </citation>
    <scope>NUCLEOTIDE SEQUENCE [LARGE SCALE GENOMIC DNA]</scope>
    <source>
        <strain>AB0057</strain>
    </source>
</reference>